<comment type="catalytic activity">
    <reaction>
        <text>isochorismate + H2O = (2S,3S)-2,3-dihydroxy-2,3-dihydrobenzoate + pyruvate</text>
        <dbReference type="Rhea" id="RHEA:11112"/>
        <dbReference type="ChEBI" id="CHEBI:15361"/>
        <dbReference type="ChEBI" id="CHEBI:15377"/>
        <dbReference type="ChEBI" id="CHEBI:29780"/>
        <dbReference type="ChEBI" id="CHEBI:58764"/>
        <dbReference type="EC" id="3.3.2.1"/>
    </reaction>
</comment>
<comment type="pathway">
    <text>Siderophore biosynthesis; bacillibactin biosynthesis.</text>
</comment>
<comment type="induction">
    <text>By superoxide.</text>
</comment>
<comment type="similarity">
    <text evidence="2">Belongs to the isochorismatase family.</text>
</comment>
<evidence type="ECO:0000255" key="1">
    <source>
        <dbReference type="PROSITE-ProRule" id="PRU00258"/>
    </source>
</evidence>
<evidence type="ECO:0000305" key="2"/>
<reference key="1">
    <citation type="journal article" date="1996" name="J. Bacteriol.">
        <title>Duplicate isochorismate synthase genes of Bacillus subtilis: regulation and involvement in the biosyntheses of menaquinone and 2,3-dihydroxybenzoate.</title>
        <authorList>
            <person name="Rowland B.M."/>
            <person name="Taber H.W."/>
        </authorList>
    </citation>
    <scope>NUCLEOTIDE SEQUENCE [GENOMIC DNA]</scope>
    <source>
        <strain>168 / Marburg / ATCC 6051 / DSM 10 / JCM 1465 / NBRC 13719 / NCIMB 3610 / NRRL NRS-744 / VKM B-501</strain>
    </source>
</reference>
<reference key="2">
    <citation type="journal article" date="1997" name="Nature">
        <title>The complete genome sequence of the Gram-positive bacterium Bacillus subtilis.</title>
        <authorList>
            <person name="Kunst F."/>
            <person name="Ogasawara N."/>
            <person name="Moszer I."/>
            <person name="Albertini A.M."/>
            <person name="Alloni G."/>
            <person name="Azevedo V."/>
            <person name="Bertero M.G."/>
            <person name="Bessieres P."/>
            <person name="Bolotin A."/>
            <person name="Borchert S."/>
            <person name="Borriss R."/>
            <person name="Boursier L."/>
            <person name="Brans A."/>
            <person name="Braun M."/>
            <person name="Brignell S.C."/>
            <person name="Bron S."/>
            <person name="Brouillet S."/>
            <person name="Bruschi C.V."/>
            <person name="Caldwell B."/>
            <person name="Capuano V."/>
            <person name="Carter N.M."/>
            <person name="Choi S.-K."/>
            <person name="Codani J.-J."/>
            <person name="Connerton I.F."/>
            <person name="Cummings N.J."/>
            <person name="Daniel R.A."/>
            <person name="Denizot F."/>
            <person name="Devine K.M."/>
            <person name="Duesterhoeft A."/>
            <person name="Ehrlich S.D."/>
            <person name="Emmerson P.T."/>
            <person name="Entian K.-D."/>
            <person name="Errington J."/>
            <person name="Fabret C."/>
            <person name="Ferrari E."/>
            <person name="Foulger D."/>
            <person name="Fritz C."/>
            <person name="Fujita M."/>
            <person name="Fujita Y."/>
            <person name="Fuma S."/>
            <person name="Galizzi A."/>
            <person name="Galleron N."/>
            <person name="Ghim S.-Y."/>
            <person name="Glaser P."/>
            <person name="Goffeau A."/>
            <person name="Golightly E.J."/>
            <person name="Grandi G."/>
            <person name="Guiseppi G."/>
            <person name="Guy B.J."/>
            <person name="Haga K."/>
            <person name="Haiech J."/>
            <person name="Harwood C.R."/>
            <person name="Henaut A."/>
            <person name="Hilbert H."/>
            <person name="Holsappel S."/>
            <person name="Hosono S."/>
            <person name="Hullo M.-F."/>
            <person name="Itaya M."/>
            <person name="Jones L.-M."/>
            <person name="Joris B."/>
            <person name="Karamata D."/>
            <person name="Kasahara Y."/>
            <person name="Klaerr-Blanchard M."/>
            <person name="Klein C."/>
            <person name="Kobayashi Y."/>
            <person name="Koetter P."/>
            <person name="Koningstein G."/>
            <person name="Krogh S."/>
            <person name="Kumano M."/>
            <person name="Kurita K."/>
            <person name="Lapidus A."/>
            <person name="Lardinois S."/>
            <person name="Lauber J."/>
            <person name="Lazarevic V."/>
            <person name="Lee S.-M."/>
            <person name="Levine A."/>
            <person name="Liu H."/>
            <person name="Masuda S."/>
            <person name="Mauel C."/>
            <person name="Medigue C."/>
            <person name="Medina N."/>
            <person name="Mellado R.P."/>
            <person name="Mizuno M."/>
            <person name="Moestl D."/>
            <person name="Nakai S."/>
            <person name="Noback M."/>
            <person name="Noone D."/>
            <person name="O'Reilly M."/>
            <person name="Ogawa K."/>
            <person name="Ogiwara A."/>
            <person name="Oudega B."/>
            <person name="Park S.-H."/>
            <person name="Parro V."/>
            <person name="Pohl T.M."/>
            <person name="Portetelle D."/>
            <person name="Porwollik S."/>
            <person name="Prescott A.M."/>
            <person name="Presecan E."/>
            <person name="Pujic P."/>
            <person name="Purnelle B."/>
            <person name="Rapoport G."/>
            <person name="Rey M."/>
            <person name="Reynolds S."/>
            <person name="Rieger M."/>
            <person name="Rivolta C."/>
            <person name="Rocha E."/>
            <person name="Roche B."/>
            <person name="Rose M."/>
            <person name="Sadaie Y."/>
            <person name="Sato T."/>
            <person name="Scanlan E."/>
            <person name="Schleich S."/>
            <person name="Schroeter R."/>
            <person name="Scoffone F."/>
            <person name="Sekiguchi J."/>
            <person name="Sekowska A."/>
            <person name="Seror S.J."/>
            <person name="Serror P."/>
            <person name="Shin B.-S."/>
            <person name="Soldo B."/>
            <person name="Sorokin A."/>
            <person name="Tacconi E."/>
            <person name="Takagi T."/>
            <person name="Takahashi H."/>
            <person name="Takemaru K."/>
            <person name="Takeuchi M."/>
            <person name="Tamakoshi A."/>
            <person name="Tanaka T."/>
            <person name="Terpstra P."/>
            <person name="Tognoni A."/>
            <person name="Tosato V."/>
            <person name="Uchiyama S."/>
            <person name="Vandenbol M."/>
            <person name="Vannier F."/>
            <person name="Vassarotti A."/>
            <person name="Viari A."/>
            <person name="Wambutt R."/>
            <person name="Wedler E."/>
            <person name="Wedler H."/>
            <person name="Weitzenegger T."/>
            <person name="Winters P."/>
            <person name="Wipat A."/>
            <person name="Yamamoto H."/>
            <person name="Yamane K."/>
            <person name="Yasumoto K."/>
            <person name="Yata K."/>
            <person name="Yoshida K."/>
            <person name="Yoshikawa H.-F."/>
            <person name="Zumstein E."/>
            <person name="Yoshikawa H."/>
            <person name="Danchin A."/>
        </authorList>
    </citation>
    <scope>NUCLEOTIDE SEQUENCE [LARGE SCALE GENOMIC DNA]</scope>
    <source>
        <strain>168</strain>
    </source>
</reference>
<reference key="3">
    <citation type="journal article" date="1997" name="Electrophoresis">
        <title>First steps from a two-dimensional protein index towards a response-regulation map for Bacillus subtilis.</title>
        <authorList>
            <person name="Antelmann H."/>
            <person name="Bernhardt J."/>
            <person name="Schmid R."/>
            <person name="Mach H."/>
            <person name="Voelker U."/>
            <person name="Hecker M."/>
        </authorList>
    </citation>
    <scope>PROTEIN SEQUENCE OF 1-16</scope>
    <source>
        <strain>168 / IS58</strain>
    </source>
</reference>
<proteinExistence type="evidence at protein level"/>
<protein>
    <recommendedName>
        <fullName>Isochorismatase</fullName>
        <ecNumber>3.3.2.1</ecNumber>
    </recommendedName>
    <alternativeName>
        <fullName>2,3 dihydro-2,3 dihydroxybenzoate synthase</fullName>
    </alternativeName>
    <alternativeName>
        <fullName>Superoxide-inducible protein 1</fullName>
        <shortName>SOI1</shortName>
    </alternativeName>
</protein>
<keyword id="KW-0903">Direct protein sequencing</keyword>
<keyword id="KW-0378">Hydrolase</keyword>
<keyword id="KW-0596">Phosphopantetheine</keyword>
<keyword id="KW-0597">Phosphoprotein</keyword>
<keyword id="KW-1185">Reference proteome</keyword>
<name>DHBB_BACSU</name>
<organism>
    <name type="scientific">Bacillus subtilis (strain 168)</name>
    <dbReference type="NCBI Taxonomy" id="224308"/>
    <lineage>
        <taxon>Bacteria</taxon>
        <taxon>Bacillati</taxon>
        <taxon>Bacillota</taxon>
        <taxon>Bacilli</taxon>
        <taxon>Bacillales</taxon>
        <taxon>Bacillaceae</taxon>
        <taxon>Bacillus</taxon>
    </lineage>
</organism>
<feature type="chain" id="PRO_0000201821" description="Isochorismatase">
    <location>
        <begin position="1"/>
        <end position="312"/>
    </location>
</feature>
<feature type="domain" description="Carrier" evidence="1">
    <location>
        <begin position="229"/>
        <end position="302"/>
    </location>
</feature>
<feature type="modified residue" description="O-(pantetheine 4'-phosphoryl)serine" evidence="1">
    <location>
        <position position="263"/>
    </location>
</feature>
<accession>P45743</accession>
<gene>
    <name type="primary">dhbB</name>
    <name type="ordered locus">BSU31970</name>
</gene>
<dbReference type="EC" id="3.3.2.1"/>
<dbReference type="EMBL" id="U26444">
    <property type="protein sequence ID" value="AAC44633.1"/>
    <property type="molecule type" value="Genomic_DNA"/>
</dbReference>
<dbReference type="EMBL" id="AL009126">
    <property type="protein sequence ID" value="CAB15187.1"/>
    <property type="molecule type" value="Genomic_DNA"/>
</dbReference>
<dbReference type="PIR" id="B69615">
    <property type="entry name" value="B69615"/>
</dbReference>
<dbReference type="RefSeq" id="NP_391077.1">
    <property type="nucleotide sequence ID" value="NC_000964.3"/>
</dbReference>
<dbReference type="RefSeq" id="WP_003228749.1">
    <property type="nucleotide sequence ID" value="NZ_OZ025638.1"/>
</dbReference>
<dbReference type="SMR" id="P45743"/>
<dbReference type="FunCoup" id="P45743">
    <property type="interactions" value="122"/>
</dbReference>
<dbReference type="IntAct" id="P45743">
    <property type="interactions" value="2"/>
</dbReference>
<dbReference type="MINT" id="P45743"/>
<dbReference type="STRING" id="224308.BSU31970"/>
<dbReference type="jPOST" id="P45743"/>
<dbReference type="PaxDb" id="224308-BSU31970"/>
<dbReference type="EnsemblBacteria" id="CAB15187">
    <property type="protein sequence ID" value="CAB15187"/>
    <property type="gene ID" value="BSU_31970"/>
</dbReference>
<dbReference type="GeneID" id="936582"/>
<dbReference type="KEGG" id="bsu:BSU31970"/>
<dbReference type="PATRIC" id="fig|224308.179.peg.3463"/>
<dbReference type="eggNOG" id="COG1535">
    <property type="taxonomic scope" value="Bacteria"/>
</dbReference>
<dbReference type="eggNOG" id="COG3433">
    <property type="taxonomic scope" value="Bacteria"/>
</dbReference>
<dbReference type="InParanoid" id="P45743"/>
<dbReference type="OrthoDB" id="257098at2"/>
<dbReference type="PhylomeDB" id="P45743"/>
<dbReference type="BioCyc" id="BSUB:BSU31970-MONOMER"/>
<dbReference type="BioCyc" id="MetaCyc:MONOMER-13911"/>
<dbReference type="UniPathway" id="UPA00013"/>
<dbReference type="Proteomes" id="UP000001570">
    <property type="component" value="Chromosome"/>
</dbReference>
<dbReference type="GO" id="GO:0008908">
    <property type="term" value="F:isochorismatase activity"/>
    <property type="evidence" value="ECO:0007669"/>
    <property type="project" value="UniProtKB-EC"/>
</dbReference>
<dbReference type="CDD" id="cd01013">
    <property type="entry name" value="isochorismatase"/>
    <property type="match status" value="1"/>
</dbReference>
<dbReference type="FunFam" id="1.10.1200.10:FF:000021">
    <property type="entry name" value="Isochorismatase"/>
    <property type="match status" value="1"/>
</dbReference>
<dbReference type="FunFam" id="3.40.50.850:FF:000002">
    <property type="entry name" value="Vibriobactin-specific isochorismatase"/>
    <property type="match status" value="1"/>
</dbReference>
<dbReference type="Gene3D" id="1.10.1200.10">
    <property type="entry name" value="ACP-like"/>
    <property type="match status" value="1"/>
</dbReference>
<dbReference type="Gene3D" id="3.40.50.850">
    <property type="entry name" value="Isochorismatase-like"/>
    <property type="match status" value="1"/>
</dbReference>
<dbReference type="InterPro" id="IPR036736">
    <property type="entry name" value="ACP-like_sf"/>
</dbReference>
<dbReference type="InterPro" id="IPR016291">
    <property type="entry name" value="Isochorismatase"/>
</dbReference>
<dbReference type="InterPro" id="IPR000868">
    <property type="entry name" value="Isochorismatase-like_dom"/>
</dbReference>
<dbReference type="InterPro" id="IPR050272">
    <property type="entry name" value="Isochorismatase-like_hydrls"/>
</dbReference>
<dbReference type="InterPro" id="IPR036380">
    <property type="entry name" value="Isochorismatase-like_sf"/>
</dbReference>
<dbReference type="InterPro" id="IPR009081">
    <property type="entry name" value="PP-bd_ACP"/>
</dbReference>
<dbReference type="PANTHER" id="PTHR43540:SF3">
    <property type="entry name" value="ENTEROBACTIN SYNTHASE COMPONENT B"/>
    <property type="match status" value="1"/>
</dbReference>
<dbReference type="PANTHER" id="PTHR43540">
    <property type="entry name" value="PEROXYUREIDOACRYLATE/UREIDOACRYLATE AMIDOHYDROLASE-RELATED"/>
    <property type="match status" value="1"/>
</dbReference>
<dbReference type="Pfam" id="PF00857">
    <property type="entry name" value="Isochorismatase"/>
    <property type="match status" value="1"/>
</dbReference>
<dbReference type="Pfam" id="PF00550">
    <property type="entry name" value="PP-binding"/>
    <property type="match status" value="1"/>
</dbReference>
<dbReference type="PIRSF" id="PIRSF001111">
    <property type="entry name" value="Isochorismatase"/>
    <property type="match status" value="1"/>
</dbReference>
<dbReference type="PRINTS" id="PR01398">
    <property type="entry name" value="ISCHRISMTASE"/>
</dbReference>
<dbReference type="SUPFAM" id="SSF47336">
    <property type="entry name" value="ACP-like"/>
    <property type="match status" value="1"/>
</dbReference>
<dbReference type="SUPFAM" id="SSF52499">
    <property type="entry name" value="Isochorismatase-like hydrolases"/>
    <property type="match status" value="1"/>
</dbReference>
<dbReference type="PROSITE" id="PS50075">
    <property type="entry name" value="CARRIER"/>
    <property type="match status" value="1"/>
</dbReference>
<sequence>MAIPAIQPYQMPTASDMPQNKVSWVPDPNRAVLLIHDMQNYFVDAFTAGASPVTELSANIRKLKNQCVQLGIPVVYTAQPGSQNPDDRALLTDFWGPGLNSGPYEEKIITELAPEDDDLVLTKWRYSAFKRTNLLEMMRKEGRDQLIITGIYAHIGCLVTACEAFMEDIKAFFVGDAVADFSLEKHQMALEYAAGRCAFTVMTDSLLDQLQNAPADVQKTSANTGKKNVFTCENIRKQIAELLQETPEDITDQEDLLDRGLDSVRIMTLVEQWRREGAEVTFVELAERPTIEEWQKLLTTRSQQVLPNADYL</sequence>